<feature type="initiator methionine" description="Removed" evidence="1">
    <location>
        <position position="1"/>
    </location>
</feature>
<feature type="chain" id="PRO_0000228724" description="Histone H2A">
    <location>
        <begin position="2"/>
        <end position="133"/>
    </location>
</feature>
<feature type="region of interest" description="Disordered" evidence="2">
    <location>
        <begin position="1"/>
        <end position="24"/>
    </location>
</feature>
<feature type="short sequence motif" description="[ST]-Q motif">
    <location>
        <begin position="130"/>
        <end position="131"/>
    </location>
</feature>
<feature type="compositionally biased region" description="Gly residues" evidence="2">
    <location>
        <begin position="1"/>
        <end position="10"/>
    </location>
</feature>
<feature type="site" description="Not ubiquitinated" evidence="3">
    <location>
        <position position="120"/>
    </location>
</feature>
<feature type="modified residue" description="N6-acetyllysine" evidence="1">
    <location>
        <position position="5"/>
    </location>
</feature>
<feature type="modified residue" description="N6-acetyllysine" evidence="1">
    <location>
        <position position="9"/>
    </location>
</feature>
<feature type="modified residue" description="N5-methylglutamine" evidence="1">
    <location>
        <position position="106"/>
    </location>
</feature>
<feature type="modified residue" description="Phosphoserine" evidence="1">
    <location>
        <position position="130"/>
    </location>
</feature>
<dbReference type="EMBL" id="BA000054">
    <property type="protein sequence ID" value="BAE63257.1"/>
    <property type="molecule type" value="Genomic_DNA"/>
</dbReference>
<dbReference type="RefSeq" id="XP_001824390.1">
    <property type="nucleotide sequence ID" value="XM_001824338.2"/>
</dbReference>
<dbReference type="SMR" id="Q2U5A8"/>
<dbReference type="STRING" id="510516.Q2U5A8"/>
<dbReference type="EnsemblFungi" id="BAE63257">
    <property type="protein sequence ID" value="BAE63257"/>
    <property type="gene ID" value="AO090020000007"/>
</dbReference>
<dbReference type="GeneID" id="5996476"/>
<dbReference type="KEGG" id="aor:AO090020000007"/>
<dbReference type="VEuPathDB" id="FungiDB:AO090020000007"/>
<dbReference type="HOGENOM" id="CLU_062828_3_0_1"/>
<dbReference type="OMA" id="CALESQH"/>
<dbReference type="OrthoDB" id="112355at5052"/>
<dbReference type="Proteomes" id="UP000006564">
    <property type="component" value="Chromosome 6"/>
</dbReference>
<dbReference type="GO" id="GO:0000786">
    <property type="term" value="C:nucleosome"/>
    <property type="evidence" value="ECO:0007669"/>
    <property type="project" value="UniProtKB-KW"/>
</dbReference>
<dbReference type="GO" id="GO:0005634">
    <property type="term" value="C:nucleus"/>
    <property type="evidence" value="ECO:0007669"/>
    <property type="project" value="UniProtKB-SubCell"/>
</dbReference>
<dbReference type="GO" id="GO:0003677">
    <property type="term" value="F:DNA binding"/>
    <property type="evidence" value="ECO:0007669"/>
    <property type="project" value="UniProtKB-KW"/>
</dbReference>
<dbReference type="GO" id="GO:0046982">
    <property type="term" value="F:protein heterodimerization activity"/>
    <property type="evidence" value="ECO:0007669"/>
    <property type="project" value="InterPro"/>
</dbReference>
<dbReference type="GO" id="GO:0030527">
    <property type="term" value="F:structural constituent of chromatin"/>
    <property type="evidence" value="ECO:0007669"/>
    <property type="project" value="InterPro"/>
</dbReference>
<dbReference type="GO" id="GO:0006281">
    <property type="term" value="P:DNA repair"/>
    <property type="evidence" value="ECO:0007669"/>
    <property type="project" value="UniProtKB-KW"/>
</dbReference>
<dbReference type="CDD" id="cd00074">
    <property type="entry name" value="HFD_H2A"/>
    <property type="match status" value="1"/>
</dbReference>
<dbReference type="FunFam" id="1.10.20.10:FF:000008">
    <property type="entry name" value="Histone H2A"/>
    <property type="match status" value="1"/>
</dbReference>
<dbReference type="Gene3D" id="1.10.20.10">
    <property type="entry name" value="Histone, subunit A"/>
    <property type="match status" value="1"/>
</dbReference>
<dbReference type="InterPro" id="IPR009072">
    <property type="entry name" value="Histone-fold"/>
</dbReference>
<dbReference type="InterPro" id="IPR002119">
    <property type="entry name" value="Histone_H2A"/>
</dbReference>
<dbReference type="InterPro" id="IPR007125">
    <property type="entry name" value="Histone_H2A/H2B/H3"/>
</dbReference>
<dbReference type="InterPro" id="IPR032454">
    <property type="entry name" value="Histone_H2A_C"/>
</dbReference>
<dbReference type="InterPro" id="IPR032458">
    <property type="entry name" value="Histone_H2A_CS"/>
</dbReference>
<dbReference type="PANTHER" id="PTHR23430">
    <property type="entry name" value="HISTONE H2A"/>
    <property type="match status" value="1"/>
</dbReference>
<dbReference type="Pfam" id="PF00125">
    <property type="entry name" value="Histone"/>
    <property type="match status" value="1"/>
</dbReference>
<dbReference type="Pfam" id="PF16211">
    <property type="entry name" value="Histone_H2A_C"/>
    <property type="match status" value="1"/>
</dbReference>
<dbReference type="PRINTS" id="PR00620">
    <property type="entry name" value="HISTONEH2A"/>
</dbReference>
<dbReference type="SMART" id="SM00414">
    <property type="entry name" value="H2A"/>
    <property type="match status" value="1"/>
</dbReference>
<dbReference type="SUPFAM" id="SSF47113">
    <property type="entry name" value="Histone-fold"/>
    <property type="match status" value="1"/>
</dbReference>
<dbReference type="PROSITE" id="PS00046">
    <property type="entry name" value="HISTONE_H2A"/>
    <property type="match status" value="1"/>
</dbReference>
<sequence length="133" mass="14092">MTGGKSGGKASGSKNAQSRSSKAGLAFPVGRVHRLLRKGNYAQRVGAGAPVYLAAVLEYLAAEILELAGNAARDNKKTRIIPRHLQLAIRNDEELNKLLGHVTIAQGGVLPNIHQNLLPKKTPKSGKGPSQEL</sequence>
<name>H2A_ASPOR</name>
<reference key="1">
    <citation type="journal article" date="2005" name="Nature">
        <title>Genome sequencing and analysis of Aspergillus oryzae.</title>
        <authorList>
            <person name="Machida M."/>
            <person name="Asai K."/>
            <person name="Sano M."/>
            <person name="Tanaka T."/>
            <person name="Kumagai T."/>
            <person name="Terai G."/>
            <person name="Kusumoto K."/>
            <person name="Arima T."/>
            <person name="Akita O."/>
            <person name="Kashiwagi Y."/>
            <person name="Abe K."/>
            <person name="Gomi K."/>
            <person name="Horiuchi H."/>
            <person name="Kitamoto K."/>
            <person name="Kobayashi T."/>
            <person name="Takeuchi M."/>
            <person name="Denning D.W."/>
            <person name="Galagan J.E."/>
            <person name="Nierman W.C."/>
            <person name="Yu J."/>
            <person name="Archer D.B."/>
            <person name="Bennett J.W."/>
            <person name="Bhatnagar D."/>
            <person name="Cleveland T.E."/>
            <person name="Fedorova N.D."/>
            <person name="Gotoh O."/>
            <person name="Horikawa H."/>
            <person name="Hosoyama A."/>
            <person name="Ichinomiya M."/>
            <person name="Igarashi R."/>
            <person name="Iwashita K."/>
            <person name="Juvvadi P.R."/>
            <person name="Kato M."/>
            <person name="Kato Y."/>
            <person name="Kin T."/>
            <person name="Kokubun A."/>
            <person name="Maeda H."/>
            <person name="Maeyama N."/>
            <person name="Maruyama J."/>
            <person name="Nagasaki H."/>
            <person name="Nakajima T."/>
            <person name="Oda K."/>
            <person name="Okada K."/>
            <person name="Paulsen I."/>
            <person name="Sakamoto K."/>
            <person name="Sawano T."/>
            <person name="Takahashi M."/>
            <person name="Takase K."/>
            <person name="Terabayashi Y."/>
            <person name="Wortman J.R."/>
            <person name="Yamada O."/>
            <person name="Yamagata Y."/>
            <person name="Anazawa H."/>
            <person name="Hata Y."/>
            <person name="Koide Y."/>
            <person name="Komori T."/>
            <person name="Koyama Y."/>
            <person name="Minetoki T."/>
            <person name="Suharnan S."/>
            <person name="Tanaka A."/>
            <person name="Isono K."/>
            <person name="Kuhara S."/>
            <person name="Ogasawara N."/>
            <person name="Kikuchi H."/>
        </authorList>
    </citation>
    <scope>NUCLEOTIDE SEQUENCE [LARGE SCALE GENOMIC DNA]</scope>
    <source>
        <strain>ATCC 42149 / RIB 40</strain>
    </source>
</reference>
<gene>
    <name type="primary">hta1</name>
    <name type="ORF">AO090020000007</name>
</gene>
<accession>Q2U5A8</accession>
<proteinExistence type="inferred from homology"/>
<protein>
    <recommendedName>
        <fullName>Histone H2A</fullName>
    </recommendedName>
</protein>
<comment type="function">
    <text>Core component of nucleosome which plays a central role in DNA double strand break (DSB) repair. Nucleosomes wrap and compact DNA into chromatin, limiting DNA accessibility to the cellular machineries which require DNA as a template. Histones thereby play a central role in transcription regulation, DNA repair, DNA replication and chromosomal stability. DNA accessibility is regulated via a complex set of post-translational modifications of histones, also called histone code, and nucleosome remodeling.</text>
</comment>
<comment type="subunit">
    <text>The nucleosome is a histone octamer containing two molecules each of H2A, H2B, H3 and H4 assembled in one H3-H4 heterotetramer and two H2A-H2B heterodimers. The octamer wraps approximately 147 bp of DNA.</text>
</comment>
<comment type="subcellular location">
    <subcellularLocation>
        <location evidence="1">Nucleus</location>
    </subcellularLocation>
    <subcellularLocation>
        <location evidence="1">Chromosome</location>
    </subcellularLocation>
</comment>
<comment type="domain">
    <text>The [ST]-Q motif constitutes a recognition sequence for kinases from the PI3/PI4-kinase family.</text>
</comment>
<comment type="PTM">
    <text evidence="1">Phosphorylated to form H2AS128ph (gamma-H2A) in response to DNA double-strand breaks (DSBs) generated by exogenous genotoxic agents and by stalled replication forks. Phosphorylation is dependent on the DNA damage checkpoint kinases mec1/ATR and tel1/ATM, spreads on either side of a detected DSB site and may mark the surrounding chromatin for recruitment of proteins required for DNA damage signaling and repair. Gamma-H2A is removed from the DNA prior to the strand invasion-primer extension step of the repair process and subsequently dephosphorylated. Dephosphorylation is necessary for efficient recovery from the DNA damage checkpoint (By similarity).</text>
</comment>
<comment type="PTM">
    <text evidence="1">Acetylated by esa1 to form H2AK4ac and H2AK7ac.</text>
</comment>
<comment type="miscellaneous">
    <text evidence="3">In contrast to vertebrates and insects, its C-terminus is not monoubiquitinated.</text>
</comment>
<comment type="similarity">
    <text evidence="3">Belongs to the histone H2A family.</text>
</comment>
<comment type="caution">
    <text evidence="3">To ensure consistency between histone entries, we follow the 'Brno' nomenclature for histone modifications, with positions referring to those used in the literature for the 'closest' model organism. Due to slight variations in histone sequences between organisms and to the presence of initiator methionine in UniProtKB/Swiss-Prot sequences, the actual positions of modified amino acids in the sequence generally differ. In this entry the following conventions are used: H2AK4ac = acetylated Lys-5; H2AK7ac = acetylated Lys-9; H2AS128ph = phosphorylated Ser-131.</text>
</comment>
<organism>
    <name type="scientific">Aspergillus oryzae (strain ATCC 42149 / RIB 40)</name>
    <name type="common">Yellow koji mold</name>
    <dbReference type="NCBI Taxonomy" id="510516"/>
    <lineage>
        <taxon>Eukaryota</taxon>
        <taxon>Fungi</taxon>
        <taxon>Dikarya</taxon>
        <taxon>Ascomycota</taxon>
        <taxon>Pezizomycotina</taxon>
        <taxon>Eurotiomycetes</taxon>
        <taxon>Eurotiomycetidae</taxon>
        <taxon>Eurotiales</taxon>
        <taxon>Aspergillaceae</taxon>
        <taxon>Aspergillus</taxon>
        <taxon>Aspergillus subgen. Circumdati</taxon>
    </lineage>
</organism>
<evidence type="ECO:0000250" key="1"/>
<evidence type="ECO:0000256" key="2">
    <source>
        <dbReference type="SAM" id="MobiDB-lite"/>
    </source>
</evidence>
<evidence type="ECO:0000305" key="3"/>
<keyword id="KW-0007">Acetylation</keyword>
<keyword id="KW-0158">Chromosome</keyword>
<keyword id="KW-0227">DNA damage</keyword>
<keyword id="KW-0234">DNA repair</keyword>
<keyword id="KW-0238">DNA-binding</keyword>
<keyword id="KW-0488">Methylation</keyword>
<keyword id="KW-0544">Nucleosome core</keyword>
<keyword id="KW-0539">Nucleus</keyword>
<keyword id="KW-0597">Phosphoprotein</keyword>
<keyword id="KW-1185">Reference proteome</keyword>